<reference key="1">
    <citation type="journal article" date="2011" name="J. Bacteriol.">
        <title>Comparative genomics of 28 Salmonella enterica isolates: evidence for CRISPR-mediated adaptive sublineage evolution.</title>
        <authorList>
            <person name="Fricke W.F."/>
            <person name="Mammel M.K."/>
            <person name="McDermott P.F."/>
            <person name="Tartera C."/>
            <person name="White D.G."/>
            <person name="Leclerc J.E."/>
            <person name="Ravel J."/>
            <person name="Cebula T.A."/>
        </authorList>
    </citation>
    <scope>NUCLEOTIDE SEQUENCE [LARGE SCALE GENOMIC DNA]</scope>
    <source>
        <strain>SL476</strain>
    </source>
</reference>
<accession>B4TGZ2</accession>
<name>RF3_SALHS</name>
<protein>
    <recommendedName>
        <fullName evidence="1">Peptide chain release factor 3</fullName>
        <shortName evidence="1">RF-3</shortName>
    </recommendedName>
</protein>
<keyword id="KW-0963">Cytoplasm</keyword>
<keyword id="KW-0342">GTP-binding</keyword>
<keyword id="KW-0547">Nucleotide-binding</keyword>
<keyword id="KW-0648">Protein biosynthesis</keyword>
<evidence type="ECO:0000255" key="1">
    <source>
        <dbReference type="HAMAP-Rule" id="MF_00072"/>
    </source>
</evidence>
<sequence>MTLSPYLQEVAKRRTFAIISHPDAGKTTITEKVLLFGQAIQTAGTVKGRGSSQHAKSDWMEMEKQRGISITTSVMQFPYHDCLVNLLDTPGHEDFSEDTYRTLTAVDCCLMVIDAAKGVEDRTRKLMEVTRLRDTPILTFMNKLDRDIRDPMELLDEVENELKIGCAPITWPIGCGKLFKGVYHLYKDETYLYQTGKGHTIQEVRIVKGLNNPDLDAAVGEDLAQQLRDELELVQGASNEFDEELFLAGEITPVFFGTALGNFGVDHMLDGLVAWAPAPMPRQTDTRTVEASEEKFTGFVFKIQANMDPKHRDRVAFMRVVSGKYEKGMKLRQVRTGKDVVISDALTFMAGDRSHVEEAYPGDILGLHNHGTIQIGDTFTQGEMMKFTGIPNFAPELFRRIRLKDPLKQKQLLKGLVQLSEEGAVQVFRPISNNDLIVGAVGVLQFDVVVARLKSEYNVEAIYESVNVATARWVESADAKKFEEFKRKNETQLALDGGDNLTYIAPTMVNLNLTQERYPDVQFRKTREH</sequence>
<gene>
    <name evidence="1" type="primary">prfC</name>
    <name type="ordered locus">SeHA_C4968</name>
</gene>
<comment type="function">
    <text evidence="1">Increases the formation of ribosomal termination complexes and stimulates activities of RF-1 and RF-2. It binds guanine nucleotides and has strong preference for UGA stop codons. It may interact directly with the ribosome. The stimulation of RF-1 and RF-2 is significantly reduced by GTP and GDP, but not by GMP.</text>
</comment>
<comment type="subcellular location">
    <subcellularLocation>
        <location evidence="1">Cytoplasm</location>
    </subcellularLocation>
</comment>
<comment type="similarity">
    <text evidence="1">Belongs to the TRAFAC class translation factor GTPase superfamily. Classic translation factor GTPase family. PrfC subfamily.</text>
</comment>
<organism>
    <name type="scientific">Salmonella heidelberg (strain SL476)</name>
    <dbReference type="NCBI Taxonomy" id="454169"/>
    <lineage>
        <taxon>Bacteria</taxon>
        <taxon>Pseudomonadati</taxon>
        <taxon>Pseudomonadota</taxon>
        <taxon>Gammaproteobacteria</taxon>
        <taxon>Enterobacterales</taxon>
        <taxon>Enterobacteriaceae</taxon>
        <taxon>Salmonella</taxon>
    </lineage>
</organism>
<feature type="chain" id="PRO_1000092497" description="Peptide chain release factor 3">
    <location>
        <begin position="1"/>
        <end position="529"/>
    </location>
</feature>
<feature type="domain" description="tr-type G">
    <location>
        <begin position="11"/>
        <end position="280"/>
    </location>
</feature>
<feature type="binding site" evidence="1">
    <location>
        <begin position="20"/>
        <end position="27"/>
    </location>
    <ligand>
        <name>GTP</name>
        <dbReference type="ChEBI" id="CHEBI:37565"/>
    </ligand>
</feature>
<feature type="binding site" evidence="1">
    <location>
        <begin position="88"/>
        <end position="92"/>
    </location>
    <ligand>
        <name>GTP</name>
        <dbReference type="ChEBI" id="CHEBI:37565"/>
    </ligand>
</feature>
<feature type="binding site" evidence="1">
    <location>
        <begin position="142"/>
        <end position="145"/>
    </location>
    <ligand>
        <name>GTP</name>
        <dbReference type="ChEBI" id="CHEBI:37565"/>
    </ligand>
</feature>
<dbReference type="EMBL" id="CP001120">
    <property type="protein sequence ID" value="ACF68904.1"/>
    <property type="molecule type" value="Genomic_DNA"/>
</dbReference>
<dbReference type="RefSeq" id="WP_000175965.1">
    <property type="nucleotide sequence ID" value="NC_011083.1"/>
</dbReference>
<dbReference type="SMR" id="B4TGZ2"/>
<dbReference type="KEGG" id="seh:SeHA_C4968"/>
<dbReference type="HOGENOM" id="CLU_002794_2_1_6"/>
<dbReference type="Proteomes" id="UP000001866">
    <property type="component" value="Chromosome"/>
</dbReference>
<dbReference type="GO" id="GO:0005829">
    <property type="term" value="C:cytosol"/>
    <property type="evidence" value="ECO:0007669"/>
    <property type="project" value="TreeGrafter"/>
</dbReference>
<dbReference type="GO" id="GO:0005525">
    <property type="term" value="F:GTP binding"/>
    <property type="evidence" value="ECO:0007669"/>
    <property type="project" value="UniProtKB-UniRule"/>
</dbReference>
<dbReference type="GO" id="GO:0003924">
    <property type="term" value="F:GTPase activity"/>
    <property type="evidence" value="ECO:0007669"/>
    <property type="project" value="InterPro"/>
</dbReference>
<dbReference type="GO" id="GO:0097216">
    <property type="term" value="F:guanosine tetraphosphate binding"/>
    <property type="evidence" value="ECO:0007669"/>
    <property type="project" value="UniProtKB-ARBA"/>
</dbReference>
<dbReference type="GO" id="GO:0016150">
    <property type="term" value="F:translation release factor activity, codon nonspecific"/>
    <property type="evidence" value="ECO:0007669"/>
    <property type="project" value="TreeGrafter"/>
</dbReference>
<dbReference type="GO" id="GO:0016149">
    <property type="term" value="F:translation release factor activity, codon specific"/>
    <property type="evidence" value="ECO:0007669"/>
    <property type="project" value="UniProtKB-UniRule"/>
</dbReference>
<dbReference type="GO" id="GO:0006449">
    <property type="term" value="P:regulation of translational termination"/>
    <property type="evidence" value="ECO:0007669"/>
    <property type="project" value="UniProtKB-UniRule"/>
</dbReference>
<dbReference type="CDD" id="cd04169">
    <property type="entry name" value="RF3"/>
    <property type="match status" value="1"/>
</dbReference>
<dbReference type="CDD" id="cd03689">
    <property type="entry name" value="RF3_II"/>
    <property type="match status" value="1"/>
</dbReference>
<dbReference type="CDD" id="cd16259">
    <property type="entry name" value="RF3_III"/>
    <property type="match status" value="1"/>
</dbReference>
<dbReference type="FunFam" id="2.40.30.10:FF:000040">
    <property type="entry name" value="Peptide chain release factor 3"/>
    <property type="match status" value="1"/>
</dbReference>
<dbReference type="FunFam" id="3.30.70.3280:FF:000001">
    <property type="entry name" value="Peptide chain release factor 3"/>
    <property type="match status" value="1"/>
</dbReference>
<dbReference type="FunFam" id="3.40.50.300:FF:000184">
    <property type="entry name" value="Peptide chain release factor 3"/>
    <property type="match status" value="1"/>
</dbReference>
<dbReference type="FunFam" id="3.40.50.300:FF:000253">
    <property type="entry name" value="Peptide chain release factor 3"/>
    <property type="match status" value="1"/>
</dbReference>
<dbReference type="Gene3D" id="3.40.50.300">
    <property type="entry name" value="P-loop containing nucleotide triphosphate hydrolases"/>
    <property type="match status" value="3"/>
</dbReference>
<dbReference type="Gene3D" id="3.30.70.3280">
    <property type="entry name" value="Peptide chain release factor 3, domain III"/>
    <property type="match status" value="1"/>
</dbReference>
<dbReference type="HAMAP" id="MF_00072">
    <property type="entry name" value="Rel_fac_3"/>
    <property type="match status" value="1"/>
</dbReference>
<dbReference type="InterPro" id="IPR053905">
    <property type="entry name" value="EF-G-like_DII"/>
</dbReference>
<dbReference type="InterPro" id="IPR035647">
    <property type="entry name" value="EFG_III/V"/>
</dbReference>
<dbReference type="InterPro" id="IPR031157">
    <property type="entry name" value="G_TR_CS"/>
</dbReference>
<dbReference type="InterPro" id="IPR027417">
    <property type="entry name" value="P-loop_NTPase"/>
</dbReference>
<dbReference type="InterPro" id="IPR004548">
    <property type="entry name" value="PrfC"/>
</dbReference>
<dbReference type="InterPro" id="IPR032090">
    <property type="entry name" value="RF3_C"/>
</dbReference>
<dbReference type="InterPro" id="IPR038467">
    <property type="entry name" value="RF3_dom_3_sf"/>
</dbReference>
<dbReference type="InterPro" id="IPR041732">
    <property type="entry name" value="RF3_GTP-bd"/>
</dbReference>
<dbReference type="InterPro" id="IPR005225">
    <property type="entry name" value="Small_GTP-bd"/>
</dbReference>
<dbReference type="InterPro" id="IPR000795">
    <property type="entry name" value="T_Tr_GTP-bd_dom"/>
</dbReference>
<dbReference type="InterPro" id="IPR009000">
    <property type="entry name" value="Transl_B-barrel_sf"/>
</dbReference>
<dbReference type="NCBIfam" id="TIGR00503">
    <property type="entry name" value="prfC"/>
    <property type="match status" value="1"/>
</dbReference>
<dbReference type="NCBIfam" id="NF001964">
    <property type="entry name" value="PRK00741.1"/>
    <property type="match status" value="1"/>
</dbReference>
<dbReference type="NCBIfam" id="TIGR00231">
    <property type="entry name" value="small_GTP"/>
    <property type="match status" value="1"/>
</dbReference>
<dbReference type="PANTHER" id="PTHR43556">
    <property type="entry name" value="PEPTIDE CHAIN RELEASE FACTOR RF3"/>
    <property type="match status" value="1"/>
</dbReference>
<dbReference type="PANTHER" id="PTHR43556:SF2">
    <property type="entry name" value="PEPTIDE CHAIN RELEASE FACTOR RF3"/>
    <property type="match status" value="1"/>
</dbReference>
<dbReference type="Pfam" id="PF22042">
    <property type="entry name" value="EF-G_D2"/>
    <property type="match status" value="1"/>
</dbReference>
<dbReference type="Pfam" id="PF00009">
    <property type="entry name" value="GTP_EFTU"/>
    <property type="match status" value="1"/>
</dbReference>
<dbReference type="Pfam" id="PF16658">
    <property type="entry name" value="RF3_C"/>
    <property type="match status" value="1"/>
</dbReference>
<dbReference type="PRINTS" id="PR00315">
    <property type="entry name" value="ELONGATNFCT"/>
</dbReference>
<dbReference type="SUPFAM" id="SSF54980">
    <property type="entry name" value="EF-G C-terminal domain-like"/>
    <property type="match status" value="1"/>
</dbReference>
<dbReference type="SUPFAM" id="SSF52540">
    <property type="entry name" value="P-loop containing nucleoside triphosphate hydrolases"/>
    <property type="match status" value="1"/>
</dbReference>
<dbReference type="SUPFAM" id="SSF50447">
    <property type="entry name" value="Translation proteins"/>
    <property type="match status" value="1"/>
</dbReference>
<dbReference type="PROSITE" id="PS00301">
    <property type="entry name" value="G_TR_1"/>
    <property type="match status" value="1"/>
</dbReference>
<dbReference type="PROSITE" id="PS51722">
    <property type="entry name" value="G_TR_2"/>
    <property type="match status" value="1"/>
</dbReference>
<proteinExistence type="inferred from homology"/>